<keyword id="KW-0030">Aminoacyl-tRNA synthetase</keyword>
<keyword id="KW-0067">ATP-binding</keyword>
<keyword id="KW-0963">Cytoplasm</keyword>
<keyword id="KW-0436">Ligase</keyword>
<keyword id="KW-0547">Nucleotide-binding</keyword>
<keyword id="KW-0648">Protein biosynthesis</keyword>
<keyword id="KW-1185">Reference proteome</keyword>
<evidence type="ECO:0000255" key="1">
    <source>
        <dbReference type="HAMAP-Rule" id="MF_00176"/>
    </source>
</evidence>
<dbReference type="EC" id="6.1.1.11" evidence="1"/>
<dbReference type="EMBL" id="AM494475">
    <property type="protein sequence ID" value="CAM80103.1"/>
    <property type="molecule type" value="Genomic_DNA"/>
</dbReference>
<dbReference type="RefSeq" id="WP_011944752.1">
    <property type="nucleotide sequence ID" value="NC_009488.1"/>
</dbReference>
<dbReference type="SMR" id="A5CDU5"/>
<dbReference type="KEGG" id="ots:OTBS_1037"/>
<dbReference type="eggNOG" id="COG0172">
    <property type="taxonomic scope" value="Bacteria"/>
</dbReference>
<dbReference type="HOGENOM" id="CLU_023797_1_1_5"/>
<dbReference type="UniPathway" id="UPA00906">
    <property type="reaction ID" value="UER00895"/>
</dbReference>
<dbReference type="Proteomes" id="UP000001565">
    <property type="component" value="Chromosome"/>
</dbReference>
<dbReference type="GO" id="GO:0005737">
    <property type="term" value="C:cytoplasm"/>
    <property type="evidence" value="ECO:0007669"/>
    <property type="project" value="UniProtKB-SubCell"/>
</dbReference>
<dbReference type="GO" id="GO:0005524">
    <property type="term" value="F:ATP binding"/>
    <property type="evidence" value="ECO:0007669"/>
    <property type="project" value="UniProtKB-UniRule"/>
</dbReference>
<dbReference type="GO" id="GO:0004828">
    <property type="term" value="F:serine-tRNA ligase activity"/>
    <property type="evidence" value="ECO:0007669"/>
    <property type="project" value="UniProtKB-UniRule"/>
</dbReference>
<dbReference type="GO" id="GO:0016260">
    <property type="term" value="P:selenocysteine biosynthetic process"/>
    <property type="evidence" value="ECO:0007669"/>
    <property type="project" value="UniProtKB-UniRule"/>
</dbReference>
<dbReference type="GO" id="GO:0006434">
    <property type="term" value="P:seryl-tRNA aminoacylation"/>
    <property type="evidence" value="ECO:0007669"/>
    <property type="project" value="UniProtKB-UniRule"/>
</dbReference>
<dbReference type="CDD" id="cd00770">
    <property type="entry name" value="SerRS_core"/>
    <property type="match status" value="1"/>
</dbReference>
<dbReference type="Gene3D" id="3.30.930.10">
    <property type="entry name" value="Bira Bifunctional Protein, Domain 2"/>
    <property type="match status" value="1"/>
</dbReference>
<dbReference type="Gene3D" id="1.10.287.40">
    <property type="entry name" value="Serine-tRNA synthetase, tRNA binding domain"/>
    <property type="match status" value="1"/>
</dbReference>
<dbReference type="HAMAP" id="MF_00176">
    <property type="entry name" value="Ser_tRNA_synth_type1"/>
    <property type="match status" value="1"/>
</dbReference>
<dbReference type="InterPro" id="IPR002314">
    <property type="entry name" value="aa-tRNA-synt_IIb"/>
</dbReference>
<dbReference type="InterPro" id="IPR006195">
    <property type="entry name" value="aa-tRNA-synth_II"/>
</dbReference>
<dbReference type="InterPro" id="IPR045864">
    <property type="entry name" value="aa-tRNA-synth_II/BPL/LPL"/>
</dbReference>
<dbReference type="InterPro" id="IPR002317">
    <property type="entry name" value="Ser-tRNA-ligase_type_1"/>
</dbReference>
<dbReference type="InterPro" id="IPR015866">
    <property type="entry name" value="Ser-tRNA-synth_1_N"/>
</dbReference>
<dbReference type="InterPro" id="IPR042103">
    <property type="entry name" value="SerRS_1_N_sf"/>
</dbReference>
<dbReference type="InterPro" id="IPR033729">
    <property type="entry name" value="SerRS_core"/>
</dbReference>
<dbReference type="InterPro" id="IPR010978">
    <property type="entry name" value="tRNA-bd_arm"/>
</dbReference>
<dbReference type="NCBIfam" id="TIGR00414">
    <property type="entry name" value="serS"/>
    <property type="match status" value="1"/>
</dbReference>
<dbReference type="PANTHER" id="PTHR43697:SF1">
    <property type="entry name" value="SERINE--TRNA LIGASE"/>
    <property type="match status" value="1"/>
</dbReference>
<dbReference type="PANTHER" id="PTHR43697">
    <property type="entry name" value="SERYL-TRNA SYNTHETASE"/>
    <property type="match status" value="1"/>
</dbReference>
<dbReference type="Pfam" id="PF02403">
    <property type="entry name" value="Seryl_tRNA_N"/>
    <property type="match status" value="1"/>
</dbReference>
<dbReference type="Pfam" id="PF00587">
    <property type="entry name" value="tRNA-synt_2b"/>
    <property type="match status" value="1"/>
</dbReference>
<dbReference type="PIRSF" id="PIRSF001529">
    <property type="entry name" value="Ser-tRNA-synth_IIa"/>
    <property type="match status" value="1"/>
</dbReference>
<dbReference type="PRINTS" id="PR00981">
    <property type="entry name" value="TRNASYNTHSER"/>
</dbReference>
<dbReference type="SUPFAM" id="SSF55681">
    <property type="entry name" value="Class II aaRS and biotin synthetases"/>
    <property type="match status" value="1"/>
</dbReference>
<dbReference type="SUPFAM" id="SSF46589">
    <property type="entry name" value="tRNA-binding arm"/>
    <property type="match status" value="1"/>
</dbReference>
<dbReference type="PROSITE" id="PS50862">
    <property type="entry name" value="AA_TRNA_LIGASE_II"/>
    <property type="match status" value="1"/>
</dbReference>
<name>SYS_ORITB</name>
<reference key="1">
    <citation type="journal article" date="2007" name="Proc. Natl. Acad. Sci. U.S.A.">
        <title>The Orientia tsutsugamushi genome reveals massive proliferation of conjugative type IV secretion system and host-cell interaction genes.</title>
        <authorList>
            <person name="Cho N.-H."/>
            <person name="Kim H.-R."/>
            <person name="Lee J.-H."/>
            <person name="Kim S.-Y."/>
            <person name="Kim J."/>
            <person name="Cha S."/>
            <person name="Kim S.-Y."/>
            <person name="Darby A.C."/>
            <person name="Fuxelius H.-H."/>
            <person name="Yin J."/>
            <person name="Kim J.H."/>
            <person name="Kim J."/>
            <person name="Lee S.J."/>
            <person name="Koh Y.-S."/>
            <person name="Jang W.-J."/>
            <person name="Park K.-H."/>
            <person name="Andersson S.G.E."/>
            <person name="Choi M.-S."/>
            <person name="Kim I.-S."/>
        </authorList>
    </citation>
    <scope>NUCLEOTIDE SEQUENCE [LARGE SCALE GENOMIC DNA]</scope>
    <source>
        <strain>Boryong</strain>
    </source>
</reference>
<comment type="function">
    <text evidence="1">Catalyzes the attachment of serine to tRNA(Ser). Is also able to aminoacylate tRNA(Sec) with serine, to form the misacylated tRNA L-seryl-tRNA(Sec), which will be further converted into selenocysteinyl-tRNA(Sec).</text>
</comment>
<comment type="catalytic activity">
    <reaction evidence="1">
        <text>tRNA(Ser) + L-serine + ATP = L-seryl-tRNA(Ser) + AMP + diphosphate + H(+)</text>
        <dbReference type="Rhea" id="RHEA:12292"/>
        <dbReference type="Rhea" id="RHEA-COMP:9669"/>
        <dbReference type="Rhea" id="RHEA-COMP:9703"/>
        <dbReference type="ChEBI" id="CHEBI:15378"/>
        <dbReference type="ChEBI" id="CHEBI:30616"/>
        <dbReference type="ChEBI" id="CHEBI:33019"/>
        <dbReference type="ChEBI" id="CHEBI:33384"/>
        <dbReference type="ChEBI" id="CHEBI:78442"/>
        <dbReference type="ChEBI" id="CHEBI:78533"/>
        <dbReference type="ChEBI" id="CHEBI:456215"/>
        <dbReference type="EC" id="6.1.1.11"/>
    </reaction>
</comment>
<comment type="catalytic activity">
    <reaction evidence="1">
        <text>tRNA(Sec) + L-serine + ATP = L-seryl-tRNA(Sec) + AMP + diphosphate + H(+)</text>
        <dbReference type="Rhea" id="RHEA:42580"/>
        <dbReference type="Rhea" id="RHEA-COMP:9742"/>
        <dbReference type="Rhea" id="RHEA-COMP:10128"/>
        <dbReference type="ChEBI" id="CHEBI:15378"/>
        <dbReference type="ChEBI" id="CHEBI:30616"/>
        <dbReference type="ChEBI" id="CHEBI:33019"/>
        <dbReference type="ChEBI" id="CHEBI:33384"/>
        <dbReference type="ChEBI" id="CHEBI:78442"/>
        <dbReference type="ChEBI" id="CHEBI:78533"/>
        <dbReference type="ChEBI" id="CHEBI:456215"/>
        <dbReference type="EC" id="6.1.1.11"/>
    </reaction>
</comment>
<comment type="pathway">
    <text evidence="1">Aminoacyl-tRNA biosynthesis; selenocysteinyl-tRNA(Sec) biosynthesis; L-seryl-tRNA(Sec) from L-serine and tRNA(Sec): step 1/1.</text>
</comment>
<comment type="subunit">
    <text evidence="1">Homodimer. The tRNA molecule binds across the dimer.</text>
</comment>
<comment type="subcellular location">
    <subcellularLocation>
        <location evidence="1">Cytoplasm</location>
    </subcellularLocation>
</comment>
<comment type="domain">
    <text evidence="1">Consists of two distinct domains, a catalytic core and a N-terminal extension that is involved in tRNA binding.</text>
</comment>
<comment type="similarity">
    <text evidence="1">Belongs to the class-II aminoacyl-tRNA synthetase family. Type-1 seryl-tRNA synthetase subfamily.</text>
</comment>
<organism>
    <name type="scientific">Orientia tsutsugamushi (strain Boryong)</name>
    <name type="common">Rickettsia tsutsugamushi</name>
    <dbReference type="NCBI Taxonomy" id="357244"/>
    <lineage>
        <taxon>Bacteria</taxon>
        <taxon>Pseudomonadati</taxon>
        <taxon>Pseudomonadota</taxon>
        <taxon>Alphaproteobacteria</taxon>
        <taxon>Rickettsiales</taxon>
        <taxon>Rickettsiaceae</taxon>
        <taxon>Rickettsieae</taxon>
        <taxon>Orientia</taxon>
    </lineage>
</organism>
<protein>
    <recommendedName>
        <fullName evidence="1">Serine--tRNA ligase</fullName>
        <ecNumber evidence="1">6.1.1.11</ecNumber>
    </recommendedName>
    <alternativeName>
        <fullName evidence="1">Seryl-tRNA synthetase</fullName>
        <shortName evidence="1">SerRS</shortName>
    </alternativeName>
    <alternativeName>
        <fullName evidence="1">Seryl-tRNA(Ser/Sec) synthetase</fullName>
    </alternativeName>
</protein>
<feature type="chain" id="PRO_1000019755" description="Serine--tRNA ligase">
    <location>
        <begin position="1"/>
        <end position="429"/>
    </location>
</feature>
<feature type="binding site" evidence="1">
    <location>
        <begin position="229"/>
        <end position="231"/>
    </location>
    <ligand>
        <name>L-serine</name>
        <dbReference type="ChEBI" id="CHEBI:33384"/>
    </ligand>
</feature>
<feature type="binding site" evidence="1">
    <location>
        <begin position="260"/>
        <end position="262"/>
    </location>
    <ligand>
        <name>ATP</name>
        <dbReference type="ChEBI" id="CHEBI:30616"/>
    </ligand>
</feature>
<feature type="binding site" evidence="1">
    <location>
        <position position="283"/>
    </location>
    <ligand>
        <name>L-serine</name>
        <dbReference type="ChEBI" id="CHEBI:33384"/>
    </ligand>
</feature>
<feature type="binding site" evidence="1">
    <location>
        <begin position="347"/>
        <end position="350"/>
    </location>
    <ligand>
        <name>ATP</name>
        <dbReference type="ChEBI" id="CHEBI:30616"/>
    </ligand>
</feature>
<feature type="binding site" evidence="1">
    <location>
        <position position="383"/>
    </location>
    <ligand>
        <name>L-serine</name>
        <dbReference type="ChEBI" id="CHEBI:33384"/>
    </ligand>
</feature>
<sequence>MLDIKWIRANPDKLDESLSKRGIDSVSKSIIHIDSEKRTLISLIQKLQHERKEKSNSVAHIYDKSSTDFEEIQNDVKLINQKITELETSLLHHEKRLSEIMDNLPNLVADDVPYGTNSDMNKVLKECGTIQNIKFPKHHYEIGKNLGMIDFNTATKMSGSRFVILKHDLAKLERALINFMIDVHTTEFNFFEVSPPCLVKDHAMYNVGQLPKFADASFETTTGYRLIPTAEVPLTNIFANTTLLEEKLPIRLVAFTPCFRSEVGSAGKDVKGMLRMHQFGKVELFTIATPEESNREFEYLTTAAETILKKLCLPYRVVLLCSGDIGFAAHKTYDLEVWLPAQNCYREISSCSHFSSFQARRSLSKYRELCSKKVNFLHTINGSGLAVGRTIIAILENYQNPDGSVTIPEKLRNYMGGQKLITPLTETVF</sequence>
<proteinExistence type="inferred from homology"/>
<gene>
    <name evidence="1" type="primary">serS</name>
    <name type="ordered locus">OTBS_1037</name>
</gene>
<accession>A5CDU5</accession>